<name>IL2RB_PANTR</name>
<protein>
    <recommendedName>
        <fullName>Interleukin-2 receptor subunit beta</fullName>
        <shortName>IL-2 receptor subunit beta</shortName>
        <shortName>IL-2R subunit beta</shortName>
        <shortName>IL-2RB</shortName>
    </recommendedName>
    <alternativeName>
        <fullName>High affinity IL-2 receptor subunit beta</fullName>
    </alternativeName>
    <alternativeName>
        <fullName>p70-75</fullName>
    </alternativeName>
    <cdAntigenName>CD122</cdAntigenName>
</protein>
<comment type="function">
    <text evidence="2">Receptor for interleukin-2. This beta subunit is involved in receptor mediated endocytosis and transduces the mitogenic signals of IL2. Probably in association with IL15RA, involved in the stimulation of neutrophil phagocytosis by IL15 (By similarity).</text>
</comment>
<comment type="subunit">
    <text evidence="2">Non-covalent dimer of an alpha and a beta subunit. IL2R exists in 3 different forms: a high affinity dimer, an intermediate affinity monomer (beta subunit), and a low affinity monomer (alpha subunit). The high and intermediate affinity forms also associate with a gamma subunit. Interacts with SHB upon interleukin stimulation (By similarity).</text>
</comment>
<comment type="subcellular location">
    <subcellularLocation>
        <location evidence="2">Cell membrane</location>
        <topology evidence="3">Single-pass type I membrane protein</topology>
    </subcellularLocation>
    <subcellularLocation>
        <location evidence="2">Cell surface</location>
    </subcellularLocation>
</comment>
<comment type="domain">
    <text evidence="1">The WSXWS motif appears to be necessary for proper protein folding and thereby efficient intracellular transport and cell-surface receptor binding.</text>
</comment>
<comment type="domain">
    <text evidence="1">The box 1 motif is required for JAK interaction and/or activation.</text>
</comment>
<comment type="similarity">
    <text evidence="6">Belongs to the type I cytokine receptor family. Type 4 subfamily.</text>
</comment>
<reference key="1">
    <citation type="submission" date="2005-09" db="EMBL/GenBank/DDBJ databases">
        <authorList>
            <person name="Chen S."/>
            <person name="Yu L."/>
        </authorList>
    </citation>
    <scope>NUCLEOTIDE SEQUENCE [MRNA]</scope>
</reference>
<proteinExistence type="evidence at transcript level"/>
<dbReference type="EMBL" id="DQ223725">
    <property type="protein sequence ID" value="ABB03909.1"/>
    <property type="molecule type" value="mRNA"/>
</dbReference>
<dbReference type="RefSeq" id="NP_001030599.1">
    <property type="nucleotide sequence ID" value="NM_001035522.1"/>
</dbReference>
<dbReference type="SMR" id="Q38J84"/>
<dbReference type="FunCoup" id="Q38J84">
    <property type="interactions" value="977"/>
</dbReference>
<dbReference type="STRING" id="9598.ENSPTRP00000024676"/>
<dbReference type="GlyCosmos" id="Q38J84">
    <property type="glycosylation" value="4 sites, No reported glycans"/>
</dbReference>
<dbReference type="GeneID" id="470203"/>
<dbReference type="CTD" id="3560"/>
<dbReference type="InParanoid" id="Q38J84"/>
<dbReference type="Proteomes" id="UP000002277">
    <property type="component" value="Unplaced"/>
</dbReference>
<dbReference type="GO" id="GO:0009986">
    <property type="term" value="C:cell surface"/>
    <property type="evidence" value="ECO:0000250"/>
    <property type="project" value="UniProtKB"/>
</dbReference>
<dbReference type="GO" id="GO:0009897">
    <property type="term" value="C:external side of plasma membrane"/>
    <property type="evidence" value="ECO:0000318"/>
    <property type="project" value="GO_Central"/>
</dbReference>
<dbReference type="GO" id="GO:0005886">
    <property type="term" value="C:plasma membrane"/>
    <property type="evidence" value="ECO:0000250"/>
    <property type="project" value="UniProtKB"/>
</dbReference>
<dbReference type="GO" id="GO:0004896">
    <property type="term" value="F:cytokine receptor activity"/>
    <property type="evidence" value="ECO:0000318"/>
    <property type="project" value="GO_Central"/>
</dbReference>
<dbReference type="GO" id="GO:0042010">
    <property type="term" value="F:interleukin-15 receptor activity"/>
    <property type="evidence" value="ECO:0000250"/>
    <property type="project" value="UniProtKB"/>
</dbReference>
<dbReference type="GO" id="GO:0019976">
    <property type="term" value="F:interleukin-2 binding"/>
    <property type="evidence" value="ECO:0000250"/>
    <property type="project" value="UniProtKB"/>
</dbReference>
<dbReference type="GO" id="GO:0004911">
    <property type="term" value="F:interleukin-2 receptor activity"/>
    <property type="evidence" value="ECO:0000250"/>
    <property type="project" value="UniProtKB"/>
</dbReference>
<dbReference type="GO" id="GO:0019221">
    <property type="term" value="P:cytokine-mediated signaling pathway"/>
    <property type="evidence" value="ECO:0000318"/>
    <property type="project" value="GO_Central"/>
</dbReference>
<dbReference type="GO" id="GO:0016064">
    <property type="term" value="P:immunoglobulin mediated immune response"/>
    <property type="evidence" value="ECO:0000318"/>
    <property type="project" value="GO_Central"/>
</dbReference>
<dbReference type="GO" id="GO:0035723">
    <property type="term" value="P:interleukin-15-mediated signaling pathway"/>
    <property type="evidence" value="ECO:0000250"/>
    <property type="project" value="UniProtKB"/>
</dbReference>
<dbReference type="GO" id="GO:0038110">
    <property type="term" value="P:interleukin-2-mediated signaling pathway"/>
    <property type="evidence" value="ECO:0000250"/>
    <property type="project" value="UniProtKB"/>
</dbReference>
<dbReference type="GO" id="GO:0050766">
    <property type="term" value="P:positive regulation of phagocytosis"/>
    <property type="evidence" value="ECO:0000250"/>
    <property type="project" value="UniProtKB"/>
</dbReference>
<dbReference type="CDD" id="cd00063">
    <property type="entry name" value="FN3"/>
    <property type="match status" value="1"/>
</dbReference>
<dbReference type="FunFam" id="2.60.40.10:FF:001769">
    <property type="entry name" value="Interleukin-2 receptor subunit beta"/>
    <property type="match status" value="1"/>
</dbReference>
<dbReference type="FunFam" id="2.60.40.10:FF:001830">
    <property type="entry name" value="Interleukin-2 receptor subunit beta"/>
    <property type="match status" value="1"/>
</dbReference>
<dbReference type="Gene3D" id="2.60.40.10">
    <property type="entry name" value="Immunoglobulins"/>
    <property type="match status" value="2"/>
</dbReference>
<dbReference type="InterPro" id="IPR003961">
    <property type="entry name" value="FN3_dom"/>
</dbReference>
<dbReference type="InterPro" id="IPR036116">
    <property type="entry name" value="FN3_sf"/>
</dbReference>
<dbReference type="InterPro" id="IPR003531">
    <property type="entry name" value="Hempt_rcpt_S_F1_CS"/>
</dbReference>
<dbReference type="InterPro" id="IPR013783">
    <property type="entry name" value="Ig-like_fold"/>
</dbReference>
<dbReference type="InterPro" id="IPR040951">
    <property type="entry name" value="IL2RB_N1"/>
</dbReference>
<dbReference type="PANTHER" id="PTHR23037">
    <property type="entry name" value="CYTOKINE RECEPTOR"/>
    <property type="match status" value="1"/>
</dbReference>
<dbReference type="PANTHER" id="PTHR23037:SF30">
    <property type="entry name" value="INTERLEUKIN-2 RECEPTOR SUBUNIT BETA"/>
    <property type="match status" value="1"/>
</dbReference>
<dbReference type="Pfam" id="PF18707">
    <property type="entry name" value="IL2RB_N1"/>
    <property type="match status" value="1"/>
</dbReference>
<dbReference type="SMART" id="SM00060">
    <property type="entry name" value="FN3"/>
    <property type="match status" value="1"/>
</dbReference>
<dbReference type="SUPFAM" id="SSF49265">
    <property type="entry name" value="Fibronectin type III"/>
    <property type="match status" value="2"/>
</dbReference>
<dbReference type="PROSITE" id="PS50853">
    <property type="entry name" value="FN3"/>
    <property type="match status" value="1"/>
</dbReference>
<dbReference type="PROSITE" id="PS01355">
    <property type="entry name" value="HEMATOPO_REC_S_F1"/>
    <property type="match status" value="1"/>
</dbReference>
<feature type="signal peptide" evidence="1">
    <location>
        <begin position="1"/>
        <end position="26"/>
    </location>
</feature>
<feature type="chain" id="PRO_0000045410" description="Interleukin-2 receptor subunit beta">
    <location>
        <begin position="27"/>
        <end position="551"/>
    </location>
</feature>
<feature type="topological domain" description="Extracellular" evidence="3">
    <location>
        <begin position="27"/>
        <end position="240"/>
    </location>
</feature>
<feature type="transmembrane region" description="Helical" evidence="3">
    <location>
        <begin position="241"/>
        <end position="265"/>
    </location>
</feature>
<feature type="topological domain" description="Cytoplasmic" evidence="3">
    <location>
        <begin position="266"/>
        <end position="551"/>
    </location>
</feature>
<feature type="domain" description="Fibronectin type-III" evidence="4">
    <location>
        <begin position="134"/>
        <end position="234"/>
    </location>
</feature>
<feature type="region of interest" description="Disordered" evidence="5">
    <location>
        <begin position="393"/>
        <end position="412"/>
    </location>
</feature>
<feature type="region of interest" description="Disordered" evidence="5">
    <location>
        <begin position="433"/>
        <end position="476"/>
    </location>
</feature>
<feature type="short sequence motif" description="WSXWS motif">
    <location>
        <begin position="220"/>
        <end position="224"/>
    </location>
</feature>
<feature type="short sequence motif" description="Box 1 motif">
    <location>
        <begin position="278"/>
        <end position="286"/>
    </location>
</feature>
<feature type="glycosylation site" description="N-linked (GlcNAc...) asparagine" evidence="3">
    <location>
        <position position="29"/>
    </location>
</feature>
<feature type="glycosylation site" description="N-linked (GlcNAc...) asparagine" evidence="3">
    <location>
        <position position="43"/>
    </location>
</feature>
<feature type="glycosylation site" description="N-linked (GlcNAc...) asparagine" evidence="3">
    <location>
        <position position="71"/>
    </location>
</feature>
<feature type="glycosylation site" description="N-linked (GlcNAc...) asparagine" evidence="3">
    <location>
        <position position="149"/>
    </location>
</feature>
<feature type="disulfide bond" evidence="1">
    <location>
        <begin position="36"/>
        <end position="46"/>
    </location>
</feature>
<feature type="disulfide bond" evidence="1">
    <location>
        <begin position="74"/>
        <end position="86"/>
    </location>
</feature>
<gene>
    <name type="primary">IL2RB</name>
</gene>
<accession>Q38J84</accession>
<organism>
    <name type="scientific">Pan troglodytes</name>
    <name type="common">Chimpanzee</name>
    <dbReference type="NCBI Taxonomy" id="9598"/>
    <lineage>
        <taxon>Eukaryota</taxon>
        <taxon>Metazoa</taxon>
        <taxon>Chordata</taxon>
        <taxon>Craniata</taxon>
        <taxon>Vertebrata</taxon>
        <taxon>Euteleostomi</taxon>
        <taxon>Mammalia</taxon>
        <taxon>Eutheria</taxon>
        <taxon>Euarchontoglires</taxon>
        <taxon>Primates</taxon>
        <taxon>Haplorrhini</taxon>
        <taxon>Catarrhini</taxon>
        <taxon>Hominidae</taxon>
        <taxon>Pan</taxon>
    </lineage>
</organism>
<evidence type="ECO:0000250" key="1"/>
<evidence type="ECO:0000250" key="2">
    <source>
        <dbReference type="UniProtKB" id="P14784"/>
    </source>
</evidence>
<evidence type="ECO:0000255" key="3"/>
<evidence type="ECO:0000255" key="4">
    <source>
        <dbReference type="PROSITE-ProRule" id="PRU00316"/>
    </source>
</evidence>
<evidence type="ECO:0000256" key="5">
    <source>
        <dbReference type="SAM" id="MobiDB-lite"/>
    </source>
</evidence>
<evidence type="ECO:0000305" key="6"/>
<sequence>MAAPALSWRLPLLILLLPLATPWASATVNGTSQFTCFYNSRANISCVWSQDGALQDTSCQVHAWPDRRRWNQTCELLPVSQASWACNLILGAPDSQKLTTVDIVTLRVLCREGVRWRVMAIQDFKPFENLRLMAPISLQVVHVETHRCNISWEISQASHYFERHLEFEARTLSPGHTWEEAPLLTLKQKQEWICLETLTPDTQYEFQVRVKPLQGEFTTWSPWSQPLAFRTKPASLGKDTIPWLGHLLVGLSGAFGFIILVYLLINCRNTGPWLKKVLKCHTPDPSKFFSQLSSEHGGDVQKWLSSPFPSSSFSPGGLAPEISPLEVLERDKVTQLLLQQDKVPEPASLSSNHSLTSCFTNQGYFFFHLPDALEIEACQVYFTYDPYAEEDADEGVAGAPTGSSPQPLQPLSGEDDTYCTFPSRDGLLLFSPSLLGGPSPPSTAPGGSGAGEERMPPSLQERVPRDWDPQPLGPPTPGVPDLVDFQPPPELVLREAGEEVPDAGPREGVSFPWSRPPGQGEFRALNARLPLNTDAYLSLQELQGQDPTHLV</sequence>
<keyword id="KW-1003">Cell membrane</keyword>
<keyword id="KW-1015">Disulfide bond</keyword>
<keyword id="KW-0325">Glycoprotein</keyword>
<keyword id="KW-0472">Membrane</keyword>
<keyword id="KW-0675">Receptor</keyword>
<keyword id="KW-1185">Reference proteome</keyword>
<keyword id="KW-0732">Signal</keyword>
<keyword id="KW-0812">Transmembrane</keyword>
<keyword id="KW-1133">Transmembrane helix</keyword>